<protein>
    <recommendedName>
        <fullName evidence="1">Chaperone protein DnaK</fullName>
    </recommendedName>
    <alternativeName>
        <fullName evidence="1">HSP70</fullName>
    </alternativeName>
    <alternativeName>
        <fullName evidence="1">Heat shock 70 kDa protein</fullName>
    </alternativeName>
    <alternativeName>
        <fullName evidence="1">Heat shock protein 70</fullName>
    </alternativeName>
</protein>
<name>DNAK_MYCBT</name>
<dbReference type="EMBL" id="AP010918">
    <property type="protein sequence ID" value="BAH24655.1"/>
    <property type="molecule type" value="Genomic_DNA"/>
</dbReference>
<dbReference type="RefSeq" id="WP_003401814.1">
    <property type="nucleotide sequence ID" value="NZ_CP014566.1"/>
</dbReference>
<dbReference type="SMR" id="C1AK26"/>
<dbReference type="GeneID" id="45424316"/>
<dbReference type="KEGG" id="mbt:JTY_0359"/>
<dbReference type="HOGENOM" id="CLU_005965_2_3_11"/>
<dbReference type="GO" id="GO:0005524">
    <property type="term" value="F:ATP binding"/>
    <property type="evidence" value="ECO:0007669"/>
    <property type="project" value="UniProtKB-UniRule"/>
</dbReference>
<dbReference type="GO" id="GO:0140662">
    <property type="term" value="F:ATP-dependent protein folding chaperone"/>
    <property type="evidence" value="ECO:0007669"/>
    <property type="project" value="InterPro"/>
</dbReference>
<dbReference type="GO" id="GO:0051082">
    <property type="term" value="F:unfolded protein binding"/>
    <property type="evidence" value="ECO:0007669"/>
    <property type="project" value="InterPro"/>
</dbReference>
<dbReference type="CDD" id="cd10234">
    <property type="entry name" value="ASKHA_NBD_HSP70_DnaK-like"/>
    <property type="match status" value="1"/>
</dbReference>
<dbReference type="FunFam" id="2.60.34.10:FF:000014">
    <property type="entry name" value="Chaperone protein DnaK HSP70"/>
    <property type="match status" value="1"/>
</dbReference>
<dbReference type="FunFam" id="1.20.1270.10:FF:000001">
    <property type="entry name" value="Molecular chaperone DnaK"/>
    <property type="match status" value="1"/>
</dbReference>
<dbReference type="FunFam" id="3.30.420.40:FF:000071">
    <property type="entry name" value="Molecular chaperone DnaK"/>
    <property type="match status" value="1"/>
</dbReference>
<dbReference type="FunFam" id="3.90.640.10:FF:000003">
    <property type="entry name" value="Molecular chaperone DnaK"/>
    <property type="match status" value="1"/>
</dbReference>
<dbReference type="Gene3D" id="1.20.1270.10">
    <property type="match status" value="1"/>
</dbReference>
<dbReference type="Gene3D" id="3.30.420.40">
    <property type="match status" value="2"/>
</dbReference>
<dbReference type="Gene3D" id="3.90.640.10">
    <property type="entry name" value="Actin, Chain A, domain 4"/>
    <property type="match status" value="1"/>
</dbReference>
<dbReference type="Gene3D" id="2.60.34.10">
    <property type="entry name" value="Substrate Binding Domain Of DNAk, Chain A, domain 1"/>
    <property type="match status" value="1"/>
</dbReference>
<dbReference type="HAMAP" id="MF_00332">
    <property type="entry name" value="DnaK"/>
    <property type="match status" value="1"/>
</dbReference>
<dbReference type="InterPro" id="IPR043129">
    <property type="entry name" value="ATPase_NBD"/>
</dbReference>
<dbReference type="InterPro" id="IPR012725">
    <property type="entry name" value="Chaperone_DnaK"/>
</dbReference>
<dbReference type="InterPro" id="IPR018181">
    <property type="entry name" value="Heat_shock_70_CS"/>
</dbReference>
<dbReference type="InterPro" id="IPR029048">
    <property type="entry name" value="HSP70_C_sf"/>
</dbReference>
<dbReference type="InterPro" id="IPR029047">
    <property type="entry name" value="HSP70_peptide-bd_sf"/>
</dbReference>
<dbReference type="InterPro" id="IPR013126">
    <property type="entry name" value="Hsp_70_fam"/>
</dbReference>
<dbReference type="NCBIfam" id="NF001413">
    <property type="entry name" value="PRK00290.1"/>
    <property type="match status" value="1"/>
</dbReference>
<dbReference type="NCBIfam" id="TIGR02350">
    <property type="entry name" value="prok_dnaK"/>
    <property type="match status" value="1"/>
</dbReference>
<dbReference type="PANTHER" id="PTHR19375">
    <property type="entry name" value="HEAT SHOCK PROTEIN 70KDA"/>
    <property type="match status" value="1"/>
</dbReference>
<dbReference type="Pfam" id="PF00012">
    <property type="entry name" value="HSP70"/>
    <property type="match status" value="1"/>
</dbReference>
<dbReference type="PRINTS" id="PR00301">
    <property type="entry name" value="HEATSHOCK70"/>
</dbReference>
<dbReference type="SUPFAM" id="SSF53067">
    <property type="entry name" value="Actin-like ATPase domain"/>
    <property type="match status" value="2"/>
</dbReference>
<dbReference type="SUPFAM" id="SSF100934">
    <property type="entry name" value="Heat shock protein 70kD (HSP70), C-terminal subdomain"/>
    <property type="match status" value="1"/>
</dbReference>
<dbReference type="SUPFAM" id="SSF100920">
    <property type="entry name" value="Heat shock protein 70kD (HSP70), peptide-binding domain"/>
    <property type="match status" value="1"/>
</dbReference>
<dbReference type="PROSITE" id="PS00297">
    <property type="entry name" value="HSP70_1"/>
    <property type="match status" value="1"/>
</dbReference>
<dbReference type="PROSITE" id="PS00329">
    <property type="entry name" value="HSP70_2"/>
    <property type="match status" value="1"/>
</dbReference>
<dbReference type="PROSITE" id="PS01036">
    <property type="entry name" value="HSP70_3"/>
    <property type="match status" value="1"/>
</dbReference>
<accession>C1AK26</accession>
<sequence length="625" mass="66831">MARAVGIDLGTTNSVVSVLEGGDPVVVANSEGSRTTPSIVAFARNGEVLVGQPAKNQAVTNVDRTVRSVKRHMGSDWSIEIDGKKYTAPEISARILMKLKRDAEAYLGEDITDAVITTPAYFNDAQRQATKDAGQIAGLNVLRIVNEPTAAALAYGLDKGEKEQRILVFDLGGGTFDVSLLEIGEGVVEVRATSGDNHLGGDDWDQRVVDWLVDKFKGTSGIDLTKDKMAMQRLREAAEKAKIELSSSQSTSINLPYITVDADKNPLFLDEQLTRAEFQRITQDLLDRTRKPFQSVIADTGISVSEIDHVVLVGGSTRMPAVTDLVKELTGGKEPNKGVNPDEVVAVGAALQAGVLKGEVKDVLLLDVTPLSLGIETKGGVMTRLIERNTTIPTKRSETFTTADDNQPSVQIQVYQGEREIAAHNKLLGSFELTGIPPAPRGIPQIEVTFDIDANGIVHVTAKDKGTGKENTIRIQEGSGLSKEDIDRMIKDAEAHAEEDRKRREEADVRNQAETLVYQTEKFVKEQREAEGGSKVPEDTLNKVDAAVAEAKAALGGSDISAIKSAMEKLGQESQALGQAIYEAAQAASQATGAAHPGGEPGGAHPGSADDVVDAEVVDDGREAK</sequence>
<evidence type="ECO:0000255" key="1">
    <source>
        <dbReference type="HAMAP-Rule" id="MF_00332"/>
    </source>
</evidence>
<evidence type="ECO:0000256" key="2">
    <source>
        <dbReference type="SAM" id="MobiDB-lite"/>
    </source>
</evidence>
<reference key="1">
    <citation type="journal article" date="2009" name="Vaccine">
        <title>Whole genome sequence analysis of Mycobacterium bovis bacillus Calmette-Guerin (BCG) Tokyo 172: a comparative study of BCG vaccine substrains.</title>
        <authorList>
            <person name="Seki M."/>
            <person name="Honda I."/>
            <person name="Fujita I."/>
            <person name="Yano I."/>
            <person name="Yamamoto S."/>
            <person name="Koyama A."/>
        </authorList>
    </citation>
    <scope>NUCLEOTIDE SEQUENCE [LARGE SCALE GENOMIC DNA]</scope>
    <source>
        <strain>BCG / Tokyo 172 / ATCC 35737 / TMC 1019</strain>
    </source>
</reference>
<organism>
    <name type="scientific">Mycobacterium bovis (strain BCG / Tokyo 172 / ATCC 35737 / TMC 1019)</name>
    <dbReference type="NCBI Taxonomy" id="561275"/>
    <lineage>
        <taxon>Bacteria</taxon>
        <taxon>Bacillati</taxon>
        <taxon>Actinomycetota</taxon>
        <taxon>Actinomycetes</taxon>
        <taxon>Mycobacteriales</taxon>
        <taxon>Mycobacteriaceae</taxon>
        <taxon>Mycobacterium</taxon>
        <taxon>Mycobacterium tuberculosis complex</taxon>
    </lineage>
</organism>
<gene>
    <name evidence="1" type="primary">dnaK</name>
    <name type="ordered locus">JTY_0359</name>
</gene>
<proteinExistence type="inferred from homology"/>
<comment type="function">
    <text evidence="1">Acts as a chaperone.</text>
</comment>
<comment type="induction">
    <text evidence="1">By stress conditions e.g. heat shock.</text>
</comment>
<comment type="similarity">
    <text evidence="1">Belongs to the heat shock protein 70 family.</text>
</comment>
<feature type="chain" id="PRO_1000133155" description="Chaperone protein DnaK">
    <location>
        <begin position="1"/>
        <end position="625"/>
    </location>
</feature>
<feature type="region of interest" description="Disordered" evidence="2">
    <location>
        <begin position="586"/>
        <end position="625"/>
    </location>
</feature>
<feature type="compositionally biased region" description="Low complexity" evidence="2">
    <location>
        <begin position="586"/>
        <end position="598"/>
    </location>
</feature>
<feature type="modified residue" description="Phosphothreonine; by autocatalysis" evidence="1">
    <location>
        <position position="175"/>
    </location>
</feature>
<keyword id="KW-0067">ATP-binding</keyword>
<keyword id="KW-0143">Chaperone</keyword>
<keyword id="KW-0547">Nucleotide-binding</keyword>
<keyword id="KW-0597">Phosphoprotein</keyword>
<keyword id="KW-0346">Stress response</keyword>